<comment type="function">
    <text evidence="1">Associated to surface IgM-receptor; may be involved in signal transduction. Involved in regulation of the catalytic activity of the phosphatases PP2A, PP4 and PP6 by protecting their partially folded catalytic subunits from degradative polyubiquitination until they associate with regulatory subunits (By similarity).</text>
</comment>
<comment type="subunit">
    <text evidence="1">Interacts with partially folded PPP2CA, but not with the fully active protein. Interacts with PPP2CB, and with PP4 and PP6. Interacts with MID1 and MID2. Interacts with ubiquitin (By similarity).</text>
</comment>
<comment type="subcellular location">
    <subcellularLocation>
        <location evidence="4">Cytoplasm</location>
    </subcellularLocation>
</comment>
<comment type="domain">
    <text evidence="1">The UIM domain is required for protective effect on PP2A.</text>
</comment>
<comment type="PTM">
    <text>Phosphorylated.</text>
</comment>
<comment type="PTM">
    <text evidence="1">Monoubiquitination by MID1 triggers calpain-mediated cleavage and switches IGBP1 activity from protective to destructive.</text>
</comment>
<comment type="similarity">
    <text evidence="4">Belongs to the IGBP1/TAP42 family.</text>
</comment>
<organism>
    <name type="scientific">Rattus norvegicus</name>
    <name type="common">Rat</name>
    <dbReference type="NCBI Taxonomy" id="10116"/>
    <lineage>
        <taxon>Eukaryota</taxon>
        <taxon>Metazoa</taxon>
        <taxon>Chordata</taxon>
        <taxon>Craniata</taxon>
        <taxon>Vertebrata</taxon>
        <taxon>Euteleostomi</taxon>
        <taxon>Mammalia</taxon>
        <taxon>Eutheria</taxon>
        <taxon>Euarchontoglires</taxon>
        <taxon>Glires</taxon>
        <taxon>Rodentia</taxon>
        <taxon>Myomorpha</taxon>
        <taxon>Muroidea</taxon>
        <taxon>Muridae</taxon>
        <taxon>Murinae</taxon>
        <taxon>Rattus</taxon>
    </lineage>
</organism>
<evidence type="ECO:0000250" key="1"/>
<evidence type="ECO:0000250" key="2">
    <source>
        <dbReference type="UniProtKB" id="P78318"/>
    </source>
</evidence>
<evidence type="ECO:0000256" key="3">
    <source>
        <dbReference type="SAM" id="MobiDB-lite"/>
    </source>
</evidence>
<evidence type="ECO:0000305" key="4"/>
<reference key="1">
    <citation type="journal article" date="1997" name="Mol. Cell. Endocrinol.">
        <title>Differential expression of elongation factor-2, alpha4 phosphoprotein and Cdc5-like protein in prolactin-dependent/independent rat lymphoid cells.</title>
        <authorList>
            <person name="Too C.K."/>
        </authorList>
    </citation>
    <scope>NUCLEOTIDE SEQUENCE [MRNA]</scope>
    <source>
        <strain>Noble</strain>
        <tissue>T-cell lymphoma</tissue>
    </source>
</reference>
<reference key="2">
    <citation type="submission" date="2000-02" db="EMBL/GenBank/DDBJ databases">
        <authorList>
            <person name="Too C.K."/>
        </authorList>
    </citation>
    <scope>SEQUENCE REVISION TO C-TERMINUS</scope>
</reference>
<reference key="3">
    <citation type="journal article" date="2004" name="Genome Res.">
        <title>The status, quality, and expansion of the NIH full-length cDNA project: the Mammalian Gene Collection (MGC).</title>
        <authorList>
            <consortium name="The MGC Project Team"/>
        </authorList>
    </citation>
    <scope>NUCLEOTIDE SEQUENCE [LARGE SCALE MRNA]</scope>
    <source>
        <tissue>Pituitary</tissue>
    </source>
</reference>
<dbReference type="EMBL" id="AF000577">
    <property type="protein sequence ID" value="AAD05364.2"/>
    <property type="molecule type" value="mRNA"/>
</dbReference>
<dbReference type="EMBL" id="BC068202">
    <property type="protein sequence ID" value="AAH68202.1"/>
    <property type="molecule type" value="mRNA"/>
</dbReference>
<dbReference type="RefSeq" id="NP_113812.1">
    <property type="nucleotide sequence ID" value="NM_031624.3"/>
</dbReference>
<dbReference type="SMR" id="O08836"/>
<dbReference type="BioGRID" id="248646">
    <property type="interactions" value="3"/>
</dbReference>
<dbReference type="FunCoup" id="O08836">
    <property type="interactions" value="2492"/>
</dbReference>
<dbReference type="STRING" id="10116.ENSRNOP00000054708"/>
<dbReference type="GlyGen" id="O08836">
    <property type="glycosylation" value="2 sites, 1 O-linked glycan (1 site)"/>
</dbReference>
<dbReference type="PhosphoSitePlus" id="O08836"/>
<dbReference type="jPOST" id="O08836"/>
<dbReference type="PaxDb" id="10116-ENSRNOP00000054708"/>
<dbReference type="Ensembl" id="ENSRNOT00000057900.5">
    <property type="protein sequence ID" value="ENSRNOP00000054708.3"/>
    <property type="gene ID" value="ENSRNOG00000026267.8"/>
</dbReference>
<dbReference type="GeneID" id="58845"/>
<dbReference type="KEGG" id="rno:58845"/>
<dbReference type="UCSC" id="RGD:62011">
    <property type="organism name" value="rat"/>
</dbReference>
<dbReference type="AGR" id="RGD:62011"/>
<dbReference type="CTD" id="3476"/>
<dbReference type="RGD" id="62011">
    <property type="gene designation" value="Igbp1"/>
</dbReference>
<dbReference type="eggNOG" id="KOG2830">
    <property type="taxonomic scope" value="Eukaryota"/>
</dbReference>
<dbReference type="GeneTree" id="ENSGT00390000002414"/>
<dbReference type="HOGENOM" id="CLU_041824_1_0_1"/>
<dbReference type="InParanoid" id="O08836"/>
<dbReference type="OMA" id="EYELCEA"/>
<dbReference type="OrthoDB" id="10261753at2759"/>
<dbReference type="PhylomeDB" id="O08836"/>
<dbReference type="PRO" id="PR:O08836"/>
<dbReference type="Proteomes" id="UP000002494">
    <property type="component" value="Chromosome X"/>
</dbReference>
<dbReference type="Bgee" id="ENSRNOG00000026267">
    <property type="expression patterns" value="Expressed in ovary and 20 other cell types or tissues"/>
</dbReference>
<dbReference type="GO" id="GO:0005737">
    <property type="term" value="C:cytoplasm"/>
    <property type="evidence" value="ECO:0000266"/>
    <property type="project" value="RGD"/>
</dbReference>
<dbReference type="GO" id="GO:0005829">
    <property type="term" value="C:cytosol"/>
    <property type="evidence" value="ECO:0000318"/>
    <property type="project" value="GO_Central"/>
</dbReference>
<dbReference type="GO" id="GO:0005874">
    <property type="term" value="C:microtubule"/>
    <property type="evidence" value="ECO:0000266"/>
    <property type="project" value="RGD"/>
</dbReference>
<dbReference type="GO" id="GO:0019899">
    <property type="term" value="F:enzyme binding"/>
    <property type="evidence" value="ECO:0000266"/>
    <property type="project" value="RGD"/>
</dbReference>
<dbReference type="GO" id="GO:0031434">
    <property type="term" value="F:mitogen-activated protein kinase kinase binding"/>
    <property type="evidence" value="ECO:0000266"/>
    <property type="project" value="RGD"/>
</dbReference>
<dbReference type="GO" id="GO:0019904">
    <property type="term" value="F:protein domain specific binding"/>
    <property type="evidence" value="ECO:0000266"/>
    <property type="project" value="RGD"/>
</dbReference>
<dbReference type="GO" id="GO:0051721">
    <property type="term" value="F:protein phosphatase 2A binding"/>
    <property type="evidence" value="ECO:0000353"/>
    <property type="project" value="RGD"/>
</dbReference>
<dbReference type="GO" id="GO:0019888">
    <property type="term" value="F:protein phosphatase regulator activity"/>
    <property type="evidence" value="ECO:0000266"/>
    <property type="project" value="RGD"/>
</dbReference>
<dbReference type="GO" id="GO:0044877">
    <property type="term" value="F:protein-containing complex binding"/>
    <property type="evidence" value="ECO:0000353"/>
    <property type="project" value="RGD"/>
</dbReference>
<dbReference type="GO" id="GO:0042113">
    <property type="term" value="P:B cell activation"/>
    <property type="evidence" value="ECO:0007669"/>
    <property type="project" value="UniProtKB-KW"/>
</dbReference>
<dbReference type="GO" id="GO:0035556">
    <property type="term" value="P:intracellular signal transduction"/>
    <property type="evidence" value="ECO:0000266"/>
    <property type="project" value="RGD"/>
</dbReference>
<dbReference type="GO" id="GO:2001234">
    <property type="term" value="P:negative regulation of apoptotic signaling pathway"/>
    <property type="evidence" value="ECO:0000266"/>
    <property type="project" value="RGD"/>
</dbReference>
<dbReference type="GO" id="GO:0032873">
    <property type="term" value="P:negative regulation of stress-activated MAPK cascade"/>
    <property type="evidence" value="ECO:0000266"/>
    <property type="project" value="RGD"/>
</dbReference>
<dbReference type="GO" id="GO:0000122">
    <property type="term" value="P:negative regulation of transcription by RNA polymerase II"/>
    <property type="evidence" value="ECO:0000266"/>
    <property type="project" value="RGD"/>
</dbReference>
<dbReference type="GO" id="GO:0035306">
    <property type="term" value="P:positive regulation of dephosphorylation"/>
    <property type="evidence" value="ECO:0000266"/>
    <property type="project" value="RGD"/>
</dbReference>
<dbReference type="GO" id="GO:0045944">
    <property type="term" value="P:positive regulation of transcription by RNA polymerase II"/>
    <property type="evidence" value="ECO:0000266"/>
    <property type="project" value="RGD"/>
</dbReference>
<dbReference type="GO" id="GO:0035303">
    <property type="term" value="P:regulation of dephosphorylation"/>
    <property type="evidence" value="ECO:0000318"/>
    <property type="project" value="GO_Central"/>
</dbReference>
<dbReference type="GO" id="GO:0060632">
    <property type="term" value="P:regulation of microtubule-based movement"/>
    <property type="evidence" value="ECO:0000266"/>
    <property type="project" value="RGD"/>
</dbReference>
<dbReference type="GO" id="GO:0070555">
    <property type="term" value="P:response to interleukin-1"/>
    <property type="evidence" value="ECO:0000266"/>
    <property type="project" value="RGD"/>
</dbReference>
<dbReference type="GO" id="GO:0034612">
    <property type="term" value="P:response to tumor necrosis factor"/>
    <property type="evidence" value="ECO:0000266"/>
    <property type="project" value="RGD"/>
</dbReference>
<dbReference type="FunFam" id="1.25.40.540:FF:000003">
    <property type="entry name" value="Immunoglobulin (CD79A)-binding protein 1"/>
    <property type="match status" value="1"/>
</dbReference>
<dbReference type="Gene3D" id="6.10.250.1140">
    <property type="match status" value="1"/>
</dbReference>
<dbReference type="Gene3D" id="1.25.40.540">
    <property type="entry name" value="TAP42-like family"/>
    <property type="match status" value="1"/>
</dbReference>
<dbReference type="InterPro" id="IPR038511">
    <property type="entry name" value="TAP42/TAP46-like_sf"/>
</dbReference>
<dbReference type="InterPro" id="IPR007304">
    <property type="entry name" value="TAP46-like"/>
</dbReference>
<dbReference type="PANTHER" id="PTHR10933">
    <property type="entry name" value="IMMUNOGLOBULIN-BINDING PROTEIN 1"/>
    <property type="match status" value="1"/>
</dbReference>
<dbReference type="PANTHER" id="PTHR10933:SF11">
    <property type="entry name" value="IMMUNOGLOBULIN-BINDING PROTEIN 1"/>
    <property type="match status" value="1"/>
</dbReference>
<dbReference type="Pfam" id="PF04177">
    <property type="entry name" value="TAP42"/>
    <property type="match status" value="1"/>
</dbReference>
<accession>O08836</accession>
<protein>
    <recommendedName>
        <fullName>Immunoglobulin-binding protein 1</fullName>
    </recommendedName>
    <alternativeName>
        <fullName>Alpha4 phosphoprotein</fullName>
    </alternativeName>
    <alternativeName>
        <fullName>CD79a-binding protein 1</fullName>
    </alternativeName>
    <alternativeName>
        <fullName>Protein phosphatase 2/4/6 regulatory subunit</fullName>
    </alternativeName>
</protein>
<sequence length="340" mass="39135">MAASEEELLLPRLPELFETSKKLLEELEVATEPTGSRTIQDKVSKGLELLEKAAGMLSQLDLFSRNEDLEEIASIDLKYLMVPALQGALTMKQVNPSKRLDHLQRAREHFIHFLTQCHCYHVAEFQLPQTKNNSAENNTARSSMAYPNLVAMASQRQAKIERYKQKKEVEHRLSALKSAVESGQADDERVREYYLLHLRRWIGISLEEIESIDQEIKILKDKDSPREESACQSSLPEKPPMKPFILTRNKAQAKVFGTGYPSLATMTVSDWYEQHQKYGALPDRGIAKPPSADFQRAAQQQEDQEQKDEENEEKALHRMREWDDWKDTHPRGYGNRQNMG</sequence>
<keyword id="KW-0007">Acetylation</keyword>
<keyword id="KW-0075">B-cell activation</keyword>
<keyword id="KW-0143">Chaperone</keyword>
<keyword id="KW-0963">Cytoplasm</keyword>
<keyword id="KW-0597">Phosphoprotein</keyword>
<keyword id="KW-1185">Reference proteome</keyword>
<keyword id="KW-0832">Ubl conjugation</keyword>
<gene>
    <name type="primary">Igbp1</name>
</gene>
<feature type="chain" id="PRO_0000218620" description="Immunoglobulin-binding protein 1">
    <location>
        <begin position="1"/>
        <end position="340"/>
    </location>
</feature>
<feature type="domain" description="UIM" evidence="4">
    <location>
        <begin position="47"/>
        <end position="61"/>
    </location>
</feature>
<feature type="region of interest" description="Interaction with PPP2CA" evidence="1">
    <location>
        <begin position="99"/>
        <end position="203"/>
    </location>
</feature>
<feature type="region of interest" description="Disordered" evidence="3">
    <location>
        <begin position="221"/>
        <end position="242"/>
    </location>
</feature>
<feature type="region of interest" description="Interaction with MID1" evidence="1">
    <location>
        <begin position="226"/>
        <end position="291"/>
    </location>
</feature>
<feature type="region of interest" description="Disordered" evidence="3">
    <location>
        <begin position="281"/>
        <end position="340"/>
    </location>
</feature>
<feature type="compositionally biased region" description="Low complexity" evidence="3">
    <location>
        <begin position="292"/>
        <end position="301"/>
    </location>
</feature>
<feature type="compositionally biased region" description="Acidic residues" evidence="3">
    <location>
        <begin position="302"/>
        <end position="312"/>
    </location>
</feature>
<feature type="compositionally biased region" description="Basic and acidic residues" evidence="3">
    <location>
        <begin position="313"/>
        <end position="330"/>
    </location>
</feature>
<feature type="site" description="Cleavage; by calpain" evidence="1">
    <location>
        <begin position="256"/>
        <end position="257"/>
    </location>
</feature>
<feature type="modified residue" description="N6-acetyllysine" evidence="2">
    <location>
        <position position="242"/>
    </location>
</feature>
<proteinExistence type="evidence at transcript level"/>
<name>IGBP1_RAT</name>